<feature type="chain" id="PRO_0000181238" description="Suppressor of cytokine signaling 2">
    <location>
        <begin position="1"/>
        <end position="198"/>
    </location>
</feature>
<feature type="domain" description="SH2" evidence="2">
    <location>
        <begin position="48"/>
        <end position="156"/>
    </location>
</feature>
<feature type="domain" description="SOCS box" evidence="3">
    <location>
        <begin position="151"/>
        <end position="197"/>
    </location>
</feature>
<feature type="region of interest" description="Interaction with AREL1" evidence="12">
    <location>
        <begin position="1"/>
        <end position="75"/>
    </location>
</feature>
<feature type="region of interest" description="Disordered" evidence="4">
    <location>
        <begin position="1"/>
        <end position="29"/>
    </location>
</feature>
<feature type="modified residue" description="Phosphoserine" evidence="34">
    <location>
        <position position="30"/>
    </location>
</feature>
<feature type="modified residue" description="Phosphoserine; by PKC" evidence="12">
    <location>
        <position position="52"/>
    </location>
</feature>
<feature type="cross-link" description="Glycyl lysine isopeptide (Lys-Gly) (interchain with G-Cter in ubiquitin)" evidence="12">
    <location>
        <position position="173"/>
    </location>
</feature>
<feature type="sequence variant" id="VAR_052032" description="Increased protein half-life; reduced interaction with AREL1; dbSNP:rs3741676." evidence="12">
    <original>S</original>
    <variation>N</variation>
    <location>
        <position position="52"/>
    </location>
</feature>
<feature type="sequence variant" id="VAR_089357" description="Decreased ability to bind phosphorylated substrates." evidence="11">
    <original>N</original>
    <variation>D</variation>
    <location>
        <position position="94"/>
    </location>
</feature>
<feature type="sequence variant" id="VAR_089358" description="Decreased ability to bind phosphorylated substrates." evidence="11 13">
    <original>R</original>
    <variation>L</variation>
    <location>
        <position position="96"/>
    </location>
</feature>
<feature type="sequence variant" id="VAR_089359" description="Does not affect ability to bind phosphorylated substrates." evidence="11">
    <original>L</original>
    <variation>V</variation>
    <location>
        <position position="106"/>
    </location>
</feature>
<feature type="sequence variant" id="VAR_089360" description="Does not affect ability to bind phosphorylated substrates." evidence="11">
    <original>C</original>
    <variation>Y</variation>
    <location>
        <position position="133"/>
    </location>
</feature>
<feature type="mutagenesis site" description="Impaired ability to mediate ubiquitination of GHR." evidence="7">
    <original>R</original>
    <variation>E</variation>
    <location>
        <position position="73"/>
    </location>
</feature>
<feature type="mutagenesis site" description="No effect on protein half-life." evidence="12">
    <original>K</original>
    <variation>R</variation>
    <location>
        <position position="87"/>
    </location>
</feature>
<feature type="mutagenesis site" description="No effect on protein half-life." evidence="12">
    <original>K</original>
    <variation>R</variation>
    <location>
        <position position="154"/>
    </location>
</feature>
<feature type="mutagenesis site" description="Abolished interaction with ELOB and ELOC, preventing formation of the ECS(SOCS2) complex." evidence="7">
    <original>L</original>
    <variation>P</variation>
    <location>
        <position position="163"/>
    </location>
</feature>
<feature type="mutagenesis site" description="Abolished interaction with ELOB and ELOC, preventing formation of the ECS(SOCS2) complex." evidence="7">
    <original>C</original>
    <variation>F</variation>
    <location>
        <position position="167"/>
    </location>
</feature>
<feature type="mutagenesis site" description="Increased protein half-life." evidence="12">
    <original>K</original>
    <variation>R</variation>
    <location>
        <position position="173"/>
    </location>
</feature>
<feature type="sequence conflict" description="In Ref. 3; AAC98896." evidence="21" ref="3">
    <original>T</original>
    <variation>N</variation>
    <location>
        <position position="2"/>
    </location>
</feature>
<feature type="sequence conflict" description="In Ref. 2; BAA22536." evidence="21" ref="2">
    <original>C</original>
    <variation>R</variation>
    <location>
        <position position="5"/>
    </location>
</feature>
<feature type="sequence conflict" description="In Ref. 3; AAC98896." evidence="21" ref="3">
    <original>PQAARLAKA</original>
    <variation>RRRRVWRR</variation>
    <location>
        <begin position="31"/>
        <end position="39"/>
    </location>
</feature>
<feature type="helix" evidence="36">
    <location>
        <begin position="33"/>
        <end position="46"/>
    </location>
</feature>
<feature type="helix" evidence="36">
    <location>
        <begin position="55"/>
        <end position="62"/>
    </location>
</feature>
<feature type="strand" evidence="37">
    <location>
        <begin position="63"/>
        <end position="65"/>
    </location>
</feature>
<feature type="strand" evidence="36">
    <location>
        <begin position="70"/>
        <end position="74"/>
    </location>
</feature>
<feature type="strand" evidence="35">
    <location>
        <begin position="76"/>
        <end position="79"/>
    </location>
</feature>
<feature type="strand" evidence="36">
    <location>
        <begin position="81"/>
        <end position="88"/>
    </location>
</feature>
<feature type="strand" evidence="36">
    <location>
        <begin position="91"/>
        <end position="100"/>
    </location>
</feature>
<feature type="strand" evidence="36">
    <location>
        <begin position="103"/>
        <end position="106"/>
    </location>
</feature>
<feature type="turn" evidence="36">
    <location>
        <begin position="108"/>
        <end position="110"/>
    </location>
</feature>
<feature type="helix" evidence="36">
    <location>
        <begin position="113"/>
        <end position="115"/>
    </location>
</feature>
<feature type="strand" evidence="38">
    <location>
        <begin position="119"/>
        <end position="121"/>
    </location>
</feature>
<feature type="helix" evidence="36">
    <location>
        <begin position="122"/>
        <end position="134"/>
    </location>
</feature>
<feature type="strand" evidence="39">
    <location>
        <begin position="144"/>
        <end position="146"/>
    </location>
</feature>
<feature type="helix" evidence="36">
    <location>
        <begin position="163"/>
        <end position="174"/>
    </location>
</feature>
<feature type="helix" evidence="36">
    <location>
        <begin position="178"/>
        <end position="180"/>
    </location>
</feature>
<feature type="strand" evidence="36">
    <location>
        <begin position="181"/>
        <end position="183"/>
    </location>
</feature>
<feature type="helix" evidence="36">
    <location>
        <begin position="185"/>
        <end position="192"/>
    </location>
</feature>
<protein>
    <recommendedName>
        <fullName evidence="21">Suppressor of cytokine signaling 2</fullName>
        <shortName evidence="20">SOCS-2</shortName>
    </recommendedName>
    <alternativeName>
        <fullName evidence="19">Cytokine-inducible SH2 protein 2</fullName>
        <shortName evidence="19">CIS-2</shortName>
    </alternativeName>
    <alternativeName>
        <fullName evidence="18">STAT-induced STAT inhibitor 2</fullName>
        <shortName evidence="18">SSI-2</shortName>
    </alternativeName>
</protein>
<accession>O14508</accession>
<accession>A8K3D1</accession>
<accession>O14542</accession>
<accession>O95102</accession>
<accession>Q9UKS5</accession>
<gene>
    <name evidence="17 22" type="primary">SOCS2</name>
    <name evidence="19" type="synonym">CIS2</name>
    <name evidence="18" type="synonym">SSI2</name>
    <name type="synonym">STATI2</name>
</gene>
<organism>
    <name type="scientific">Homo sapiens</name>
    <name type="common">Human</name>
    <dbReference type="NCBI Taxonomy" id="9606"/>
    <lineage>
        <taxon>Eukaryota</taxon>
        <taxon>Metazoa</taxon>
        <taxon>Chordata</taxon>
        <taxon>Craniata</taxon>
        <taxon>Vertebrata</taxon>
        <taxon>Euteleostomi</taxon>
        <taxon>Mammalia</taxon>
        <taxon>Eutheria</taxon>
        <taxon>Euarchontoglires</taxon>
        <taxon>Primates</taxon>
        <taxon>Haplorrhini</taxon>
        <taxon>Catarrhini</taxon>
        <taxon>Hominidae</taxon>
        <taxon>Homo</taxon>
    </lineage>
</organism>
<comment type="function">
    <text evidence="5 7 10 11 13 14">Substrate-recognition component of a cullin-5-RING E3 ubiquitin-protein ligase complex (ECS complex, also named CRL5 complex), which mediates the ubiquitination and subsequent proteasomal degradation of target proteins, such as EPOR and GHR (PubMed:11781573, PubMed:21980433, PubMed:25505247, PubMed:31182716, PubMed:34857742). Specifically recognizes and binds phosphorylated proteins via its SH2 domain, promoting their ubiquitination (PubMed:21980433, PubMed:25505247, PubMed:31182716, PubMed:34857742, PubMed:37816714). The ECS(SOCS2) complex acts as a key regulator of growth hormone receptor (GHR) levels by mediating ubiquitination and degradation of GHR, following GHR phosphorylation by JAK2 (PubMed:21980433, PubMed:25505247, PubMed:34857742). The ECS(SOCS2) also catalyzes ubiquitination and degradation of JAK2-phosphorylated EPOR (PubMed:11781573).</text>
</comment>
<comment type="activity regulation">
    <text evidence="14">Substrate-binding is prevented by the covalent inhibitor MN551 that cross-links with Cys-111 (PubMed:37816714). Also inhibited by a MN551 derivative, MN714, which contains a pivaloyloxymethyl that allows cell permeability (PubMed:37816714).</text>
</comment>
<comment type="pathway">
    <text evidence="5 7 10 11 13">Protein modification; protein ubiquitination.</text>
</comment>
<comment type="subunit">
    <text evidence="6 7 8 9 10 11 13 14 16">Substrate-recognition component of the ECS(SOCS2) complex, composed of SOCS2, CUL5, ELOB, ELOC and RNF7/RBX2 (PubMed:16675548, PubMed:21980433, PubMed:23897481, PubMed:25505247, PubMed:31182716, PubMed:34857742, PubMed:37816714). Interacts with IGF1R (PubMed:9727029). Interacts with DCUN1D1 (PubMed:23401859).</text>
</comment>
<comment type="interaction">
    <interactant intactId="EBI-617737">
        <id>O14508</id>
    </interactant>
    <interactant intactId="EBI-1057139">
        <id>Q93034</id>
        <label>CUL5</label>
    </interactant>
    <organismsDiffer>false</organismsDiffer>
    <experiments>11</experiments>
</comment>
<comment type="interaction">
    <interactant intactId="EBI-617737">
        <id>O14508</id>
    </interactant>
    <interactant intactId="EBI-301231">
        <id>Q15369</id>
        <label>ELOC</label>
    </interactant>
    <organismsDiffer>false</organismsDiffer>
    <experiments>2</experiments>
</comment>
<comment type="interaction">
    <interactant intactId="EBI-617737">
        <id>O14508</id>
    </interactant>
    <interactant intactId="EBI-617321">
        <id>P19235</id>
        <label>EPOR</label>
    </interactant>
    <organismsDiffer>false</organismsDiffer>
    <experiments>3</experiments>
</comment>
<comment type="interaction">
    <interactant intactId="EBI-617737">
        <id>O14508</id>
    </interactant>
    <interactant intactId="EBI-1379503">
        <id>P10721</id>
        <label>KIT</label>
    </interactant>
    <organismsDiffer>false</organismsDiffer>
    <experiments>4</experiments>
</comment>
<comment type="interaction">
    <interactant intactId="EBI-617737">
        <id>O14508</id>
    </interactant>
    <interactant intactId="EBI-749295">
        <id>O75716</id>
        <label>STK16</label>
    </interactant>
    <organismsDiffer>false</organismsDiffer>
    <experiments>3</experiments>
</comment>
<comment type="interaction">
    <interactant intactId="EBI-617737">
        <id>O14508</id>
    </interactant>
    <interactant intactId="EBI-12157263">
        <id>P40337-2</id>
        <label>VHL</label>
    </interactant>
    <organismsDiffer>false</organismsDiffer>
    <experiments>3</experiments>
</comment>
<comment type="interaction">
    <interactant intactId="EBI-617737">
        <id>O14508</id>
    </interactant>
    <interactant intactId="EBI-515331">
        <id>P07947</id>
        <label>YES1</label>
    </interactant>
    <organismsDiffer>false</organismsDiffer>
    <experiments>3</experiments>
</comment>
<comment type="subcellular location">
    <subcellularLocation>
        <location evidence="16">Cytoplasm</location>
    </subcellularLocation>
</comment>
<comment type="tissue specificity">
    <text evidence="12 15">High expression in heart, placenta, lung, kidney and prostate. Predominantly expressed in pulmonary epithelia cells, specifically type II pneumocytes.</text>
</comment>
<comment type="induction">
    <text>By a subset of cytokines, including EPO/erythropoietin and CSF2/GM-CSF.</text>
</comment>
<comment type="domain">
    <text evidence="15">The SOCS box domain mediates the interaction with the Elongin BC complex, an adapter module in different E3 ubiquitin ligase complexes.</text>
</comment>
<comment type="PTM">
    <text evidence="1 12">Ubiquitinated; mediated by AREL1 and leading to its subsequent proteasomal degradation (PubMed:31578312). Ubiquitination is dependent on its phosphorylation at Ser-52, by PKC (PubMed:31578312). Ubiquitination is stimulated by LPS (By similarity).</text>
</comment>
<comment type="PTM">
    <text evidence="12">Phosphorylation at Ser-52 by PKC facilitates its ubiquitination and proteasomal degradation.</text>
</comment>
<comment type="online information" name="Atlas of Genetics and Cytogenetics in Oncology and Haematology">
    <link uri="https://atlasgeneticsoncology.org/gene/44123/SOCS2"/>
</comment>
<name>SOCS2_HUMAN</name>
<proteinExistence type="evidence at protein level"/>
<reference key="1">
    <citation type="journal article" date="1997" name="Biochem. Biophys. Res. Commun.">
        <title>Cloning and functional analysis of new members of STAT induced STAT inhibitor (SSI) family: SSI-2 and SSI-3.</title>
        <authorList>
            <person name="Minamoto S."/>
            <person name="Ikegame K."/>
            <person name="Ueno K."/>
            <person name="Narazaki M."/>
            <person name="Naka T."/>
            <person name="Yamamoto H."/>
            <person name="Matsumoto T."/>
            <person name="Saito H."/>
            <person name="Hosoe S."/>
            <person name="Kishimoto T."/>
        </authorList>
    </citation>
    <scope>NUCLEOTIDE SEQUENCE [MRNA]</scope>
    <scope>TISSUE SPECIFICITY</scope>
    <scope>INDUCTION</scope>
    <source>
        <tissue>T-cell lymphoma</tissue>
    </source>
</reference>
<reference key="2">
    <citation type="journal article" date="1997" name="Biochem. Biophys. Res. Commun.">
        <title>Cloning and characterization of novel CIS family genes.</title>
        <authorList>
            <person name="Masuhara M."/>
            <person name="Sakamoto H."/>
            <person name="Matsumoto A."/>
            <person name="Suzuki R."/>
            <person name="Yasukawa H."/>
            <person name="Mitsui K."/>
            <person name="Wakioka T."/>
            <person name="Tanimura S."/>
            <person name="Sasaki A."/>
            <person name="Misawa H."/>
            <person name="Yokouchi M."/>
            <person name="Ohtsubo M."/>
            <person name="Yoshimura A."/>
        </authorList>
    </citation>
    <scope>NUCLEOTIDE SEQUENCE [MRNA]</scope>
</reference>
<reference key="3">
    <citation type="submission" date="1997-08" db="EMBL/GenBank/DDBJ databases">
        <title>Cloning of a novel human gene coding human suppressor of cytokine signaling-2 (HsSOCS-2).</title>
        <authorList>
            <person name="Tu Q."/>
            <person name="Yu L."/>
            <person name="Zhang Q."/>
        </authorList>
    </citation>
    <scope>NUCLEOTIDE SEQUENCE [MRNA]</scope>
</reference>
<reference key="4">
    <citation type="journal article" date="1998" name="J. Biol. Chem.">
        <title>Interaction of human suppressor of cytokine signaling (SOCS)-2 with the insulin-like growth factor-I receptor.</title>
        <authorList>
            <person name="Dey B.R."/>
            <person name="Spence S.L."/>
            <person name="Nissley P."/>
            <person name="Furlanetto R.W."/>
        </authorList>
    </citation>
    <scope>NUCLEOTIDE SEQUENCE [MRNA]</scope>
    <scope>INTERACTION WITH IGF1R</scope>
    <scope>SUBCELLULAR LOCATION</scope>
    <source>
        <tissue>Fetal brain</tissue>
    </source>
</reference>
<reference key="5">
    <citation type="journal article" date="2004" name="Nat. Genet.">
        <title>Complete sequencing and characterization of 21,243 full-length human cDNAs.</title>
        <authorList>
            <person name="Ota T."/>
            <person name="Suzuki Y."/>
            <person name="Nishikawa T."/>
            <person name="Otsuki T."/>
            <person name="Sugiyama T."/>
            <person name="Irie R."/>
            <person name="Wakamatsu A."/>
            <person name="Hayashi K."/>
            <person name="Sato H."/>
            <person name="Nagai K."/>
            <person name="Kimura K."/>
            <person name="Makita H."/>
            <person name="Sekine M."/>
            <person name="Obayashi M."/>
            <person name="Nishi T."/>
            <person name="Shibahara T."/>
            <person name="Tanaka T."/>
            <person name="Ishii S."/>
            <person name="Yamamoto J."/>
            <person name="Saito K."/>
            <person name="Kawai Y."/>
            <person name="Isono Y."/>
            <person name="Nakamura Y."/>
            <person name="Nagahari K."/>
            <person name="Murakami K."/>
            <person name="Yasuda T."/>
            <person name="Iwayanagi T."/>
            <person name="Wagatsuma M."/>
            <person name="Shiratori A."/>
            <person name="Sudo H."/>
            <person name="Hosoiri T."/>
            <person name="Kaku Y."/>
            <person name="Kodaira H."/>
            <person name="Kondo H."/>
            <person name="Sugawara M."/>
            <person name="Takahashi M."/>
            <person name="Kanda K."/>
            <person name="Yokoi T."/>
            <person name="Furuya T."/>
            <person name="Kikkawa E."/>
            <person name="Omura Y."/>
            <person name="Abe K."/>
            <person name="Kamihara K."/>
            <person name="Katsuta N."/>
            <person name="Sato K."/>
            <person name="Tanikawa M."/>
            <person name="Yamazaki M."/>
            <person name="Ninomiya K."/>
            <person name="Ishibashi T."/>
            <person name="Yamashita H."/>
            <person name="Murakawa K."/>
            <person name="Fujimori K."/>
            <person name="Tanai H."/>
            <person name="Kimata M."/>
            <person name="Watanabe M."/>
            <person name="Hiraoka S."/>
            <person name="Chiba Y."/>
            <person name="Ishida S."/>
            <person name="Ono Y."/>
            <person name="Takiguchi S."/>
            <person name="Watanabe S."/>
            <person name="Yosida M."/>
            <person name="Hotuta T."/>
            <person name="Kusano J."/>
            <person name="Kanehori K."/>
            <person name="Takahashi-Fujii A."/>
            <person name="Hara H."/>
            <person name="Tanase T.-O."/>
            <person name="Nomura Y."/>
            <person name="Togiya S."/>
            <person name="Komai F."/>
            <person name="Hara R."/>
            <person name="Takeuchi K."/>
            <person name="Arita M."/>
            <person name="Imose N."/>
            <person name="Musashino K."/>
            <person name="Yuuki H."/>
            <person name="Oshima A."/>
            <person name="Sasaki N."/>
            <person name="Aotsuka S."/>
            <person name="Yoshikawa Y."/>
            <person name="Matsunawa H."/>
            <person name="Ichihara T."/>
            <person name="Shiohata N."/>
            <person name="Sano S."/>
            <person name="Moriya S."/>
            <person name="Momiyama H."/>
            <person name="Satoh N."/>
            <person name="Takami S."/>
            <person name="Terashima Y."/>
            <person name="Suzuki O."/>
            <person name="Nakagawa S."/>
            <person name="Senoh A."/>
            <person name="Mizoguchi H."/>
            <person name="Goto Y."/>
            <person name="Shimizu F."/>
            <person name="Wakebe H."/>
            <person name="Hishigaki H."/>
            <person name="Watanabe T."/>
            <person name="Sugiyama A."/>
            <person name="Takemoto M."/>
            <person name="Kawakami B."/>
            <person name="Yamazaki M."/>
            <person name="Watanabe K."/>
            <person name="Kumagai A."/>
            <person name="Itakura S."/>
            <person name="Fukuzumi Y."/>
            <person name="Fujimori Y."/>
            <person name="Komiyama M."/>
            <person name="Tashiro H."/>
            <person name="Tanigami A."/>
            <person name="Fujiwara T."/>
            <person name="Ono T."/>
            <person name="Yamada K."/>
            <person name="Fujii Y."/>
            <person name="Ozaki K."/>
            <person name="Hirao M."/>
            <person name="Ohmori Y."/>
            <person name="Kawabata A."/>
            <person name="Hikiji T."/>
            <person name="Kobatake N."/>
            <person name="Inagaki H."/>
            <person name="Ikema Y."/>
            <person name="Okamoto S."/>
            <person name="Okitani R."/>
            <person name="Kawakami T."/>
            <person name="Noguchi S."/>
            <person name="Itoh T."/>
            <person name="Shigeta K."/>
            <person name="Senba T."/>
            <person name="Matsumura K."/>
            <person name="Nakajima Y."/>
            <person name="Mizuno T."/>
            <person name="Morinaga M."/>
            <person name="Sasaki M."/>
            <person name="Togashi T."/>
            <person name="Oyama M."/>
            <person name="Hata H."/>
            <person name="Watanabe M."/>
            <person name="Komatsu T."/>
            <person name="Mizushima-Sugano J."/>
            <person name="Satoh T."/>
            <person name="Shirai Y."/>
            <person name="Takahashi Y."/>
            <person name="Nakagawa K."/>
            <person name="Okumura K."/>
            <person name="Nagase T."/>
            <person name="Nomura N."/>
            <person name="Kikuchi H."/>
            <person name="Masuho Y."/>
            <person name="Yamashita R."/>
            <person name="Nakai K."/>
            <person name="Yada T."/>
            <person name="Nakamura Y."/>
            <person name="Ohara O."/>
            <person name="Isogai T."/>
            <person name="Sugano S."/>
        </authorList>
    </citation>
    <scope>NUCLEOTIDE SEQUENCE [LARGE SCALE MRNA]</scope>
    <source>
        <tissue>Brain</tissue>
        <tissue>Lung</tissue>
    </source>
</reference>
<reference key="6">
    <citation type="submission" date="2005-07" db="EMBL/GenBank/DDBJ databases">
        <authorList>
            <person name="Mural R.J."/>
            <person name="Istrail S."/>
            <person name="Sutton G."/>
            <person name="Florea L."/>
            <person name="Halpern A.L."/>
            <person name="Mobarry C.M."/>
            <person name="Lippert R."/>
            <person name="Walenz B."/>
            <person name="Shatkay H."/>
            <person name="Dew I."/>
            <person name="Miller J.R."/>
            <person name="Flanigan M.J."/>
            <person name="Edwards N.J."/>
            <person name="Bolanos R."/>
            <person name="Fasulo D."/>
            <person name="Halldorsson B.V."/>
            <person name="Hannenhalli S."/>
            <person name="Turner R."/>
            <person name="Yooseph S."/>
            <person name="Lu F."/>
            <person name="Nusskern D.R."/>
            <person name="Shue B.C."/>
            <person name="Zheng X.H."/>
            <person name="Zhong F."/>
            <person name="Delcher A.L."/>
            <person name="Huson D.H."/>
            <person name="Kravitz S.A."/>
            <person name="Mouchard L."/>
            <person name="Reinert K."/>
            <person name="Remington K.A."/>
            <person name="Clark A.G."/>
            <person name="Waterman M.S."/>
            <person name="Eichler E.E."/>
            <person name="Adams M.D."/>
            <person name="Hunkapiller M.W."/>
            <person name="Myers E.W."/>
            <person name="Venter J.C."/>
        </authorList>
    </citation>
    <scope>NUCLEOTIDE SEQUENCE [LARGE SCALE GENOMIC DNA]</scope>
</reference>
<reference key="7">
    <citation type="journal article" date="2004" name="Genome Res.">
        <title>The status, quality, and expansion of the NIH full-length cDNA project: the Mammalian Gene Collection (MGC).</title>
        <authorList>
            <consortium name="The MGC Project Team"/>
        </authorList>
    </citation>
    <scope>NUCLEOTIDE SEQUENCE [LARGE SCALE MRNA]</scope>
    <source>
        <tissue>Brain</tissue>
    </source>
</reference>
<reference key="8">
    <citation type="journal article" date="1999" name="Genomics">
        <title>Radiation hybrid and cytogenetic mapping of SOCS1 and SOCS2 to chromosomes 16p13 and 12q, respectively.</title>
        <authorList>
            <person name="Yandava C.N."/>
            <person name="Pillari A."/>
            <person name="Drazen J.M."/>
        </authorList>
    </citation>
    <scope>NUCLEOTIDE SEQUENCE [GENOMIC DNA] OF 173-198</scope>
</reference>
<reference key="9">
    <citation type="journal article" date="2001" name="Nat. Cell Biol.">
        <title>Design and application of a cytokine-receptor-based interaction trap.</title>
        <authorList>
            <person name="Eyckerman S."/>
            <person name="Verhee A."/>
            <person name="der Heyden J.V."/>
            <person name="Lemmens I."/>
            <person name="Ostade X.V."/>
            <person name="Vandekerckhove J."/>
            <person name="Tavernier J."/>
        </authorList>
    </citation>
    <scope>FUNCTION</scope>
    <scope>PATHWAY</scope>
</reference>
<reference key="10">
    <citation type="journal article" date="2011" name="BMC Syst. Biol.">
        <title>Initial characterization of the human central proteome.</title>
        <authorList>
            <person name="Burkard T.R."/>
            <person name="Planyavsky M."/>
            <person name="Kaupe I."/>
            <person name="Breitwieser F.P."/>
            <person name="Buerckstuemmer T."/>
            <person name="Bennett K.L."/>
            <person name="Superti-Furga G."/>
            <person name="Colinge J."/>
        </authorList>
    </citation>
    <scope>IDENTIFICATION BY MASS SPECTROMETRY [LARGE SCALE ANALYSIS]</scope>
</reference>
<reference key="11">
    <citation type="journal article" date="2011" name="PLoS ONE">
        <title>The SOCS2 ubiquitin ligase complex regulates growth hormone receptor levels.</title>
        <authorList>
            <person name="Vesterlund M."/>
            <person name="Zadjali F."/>
            <person name="Persson T."/>
            <person name="Nielsen M.L."/>
            <person name="Kessler B.M."/>
            <person name="Norstedt G."/>
            <person name="Flores-Morales A."/>
        </authorList>
    </citation>
    <scope>FUNCTION</scope>
    <scope>PATHWAY</scope>
    <scope>IDENTIFICATION IN THE ECS(SOCS2) COMPLEX</scope>
    <scope>MUTAGENESIS OF ARG-73; LEU-163 AND CYS-167</scope>
</reference>
<reference key="12">
    <citation type="journal article" date="2013" name="Mol. Cell. Biol.">
        <title>DCNL1 functions as a substrate sensor and activator of cullin 2-RING ligase.</title>
        <authorList>
            <person name="Heir P."/>
            <person name="Sufan R.I."/>
            <person name="Greer S.N."/>
            <person name="Poon B.P."/>
            <person name="Lee J.E."/>
            <person name="Ohh M."/>
        </authorList>
    </citation>
    <scope>INTERACTION WITH DCUN1D1</scope>
</reference>
<reference key="13">
    <citation type="journal article" date="2013" name="J. Proteome Res.">
        <title>Toward a comprehensive characterization of a human cancer cell phosphoproteome.</title>
        <authorList>
            <person name="Zhou H."/>
            <person name="Di Palma S."/>
            <person name="Preisinger C."/>
            <person name="Peng M."/>
            <person name="Polat A.N."/>
            <person name="Heck A.J."/>
            <person name="Mohammed S."/>
        </authorList>
    </citation>
    <scope>PHOSPHORYLATION [LARGE SCALE ANALYSIS] AT SER-30</scope>
    <scope>IDENTIFICATION BY MASS SPECTROMETRY [LARGE SCALE ANALYSIS]</scope>
    <source>
        <tissue>Erythroleukemia</tissue>
    </source>
</reference>
<reference key="14">
    <citation type="journal article" date="2015" name="J. Biol. Chem.">
        <title>Biophysical studies on interactions and assembly of full-size E3 ubiquitin ligase: suppressor of cytokine signaling 2 (SOCS2)-elongin BC-cullin 5-ring box protein 2 (RBX2).</title>
        <authorList>
            <person name="Bulatov E."/>
            <person name="Martin E.M."/>
            <person name="Chatterjee S."/>
            <person name="Knebel A."/>
            <person name="Shimamura S."/>
            <person name="Konijnenberg A."/>
            <person name="Johnson C."/>
            <person name="Zinn N."/>
            <person name="Grandi P."/>
            <person name="Sobott F."/>
            <person name="Ciulli A."/>
        </authorList>
    </citation>
    <scope>FUNCTION</scope>
    <scope>PATHWAY</scope>
    <scope>IDENTIFICATION IN THE ECS(SOCS2) COMPLEX</scope>
</reference>
<reference key="15">
    <citation type="journal article" date="2019" name="JCI Insight">
        <title>KIAA0317 regulates pulmonary inflammation through SOCS2 degradation.</title>
        <authorList>
            <person name="Lear T.B."/>
            <person name="McKelvey A.C."/>
            <person name="Evankovich J.W."/>
            <person name="Rajbhandari S."/>
            <person name="Coon T.A."/>
            <person name="Dunn S.R."/>
            <person name="Londino J.D."/>
            <person name="McVerry B.J."/>
            <person name="Zhang Y."/>
            <person name="Valenzi E."/>
            <person name="Burton C.L."/>
            <person name="Gordon R."/>
            <person name="Gingras S."/>
            <person name="Lockwood K.C."/>
            <person name="Jurczak M.J."/>
            <person name="Lafyatis R."/>
            <person name="Shlomchik M.J."/>
            <person name="Liu Y."/>
            <person name="Chen B.B."/>
        </authorList>
    </citation>
    <scope>PHOSPHORYLATION AT SER-52</scope>
    <scope>UBIQUITINATION AT LYS-173</scope>
    <scope>PROTEASOMAL DEGRADATION</scope>
    <scope>MUTAGENESIS OF LYS-87; LYS-154 AND LYS-173</scope>
    <scope>CHARACTERIZATION OF VARIANT ASN-52</scope>
</reference>
<reference key="16">
    <citation type="journal article" date="2006" name="Proc. Natl. Acad. Sci. U.S.A.">
        <title>Crystal structure of the SOCS2-elongin C-elongin B complex defines a prototypical SOCS box ubiquitin ligase.</title>
        <authorList>
            <person name="Bullock A.N."/>
            <person name="Debreczeni J.E."/>
            <person name="Edwards A.M."/>
            <person name="Sundstrom M."/>
            <person name="Knapp S."/>
        </authorList>
    </citation>
    <scope>X-RAY CRYSTALLOGRAPHY (1.9 ANGSTROMS) IN COMPLEX WITH THE ELONGIN BC COMPLEX</scope>
</reference>
<reference evidence="23" key="17">
    <citation type="journal article" date="2013" name="Acta Crystallogr. D">
        <title>Structural basis of intersubunit recognition in elongin BC-cullin 5-SOCS box ubiquitin-protein ligase complexes.</title>
        <authorList>
            <person name="Kim Y.K."/>
            <person name="Kwak M.J."/>
            <person name="Ku B."/>
            <person name="Suh H.Y."/>
            <person name="Joo K."/>
            <person name="Lee J."/>
            <person name="Jung J.U."/>
            <person name="Oh B.H."/>
        </authorList>
    </citation>
    <scope>X-RAY CRYSTALLOGRAPHY (3.00 ANGSTROMS) OF 32-198 IN COMPLEX WITH CUL5; ELOB AND ELOC</scope>
    <scope>IDENTIFICATION IN THE ECS(SOCS2) COMPLEX</scope>
</reference>
<reference evidence="24 25 26" key="18">
    <citation type="journal article" date="2019" name="Nat. Commun.">
        <title>Structural insights into substrate recognition by the SOCS2 E3 ubiquitin ligase.</title>
        <authorList>
            <person name="Kung W.W."/>
            <person name="Ramachandran S."/>
            <person name="Makukhin N."/>
            <person name="Bruno E."/>
            <person name="Ciulli A."/>
        </authorList>
    </citation>
    <scope>X-RAY CRYSTALLOGRAPHY (1.98 ANGSTROMS) OF 30-198 IN COMPLEX SUBSTRATE PEPTIDES WITH ELOB AND ELOC</scope>
    <scope>FUNCTION</scope>
    <scope>PATHWAY</scope>
    <scope>IDENTIFICATION IN THE ECS(SOCS2) COMPLEX</scope>
    <scope>VARIANTS ASP-94; LEU-96; VAL-106 AND TYR-133</scope>
    <scope>CHARACTERIZATION OF VARIANTS ASP-94; LEU-96; VAL-106 AND TYR-133</scope>
</reference>
<reference evidence="27" key="19">
    <citation type="journal article" date="2021" name="Nat. Commun.">
        <title>Discovery of an exosite on the SOCS2-SH2 domain that enhances SH2 binding to phosphorylated ligands.</title>
        <authorList>
            <person name="Linossi E.M."/>
            <person name="Li K."/>
            <person name="Veggiani G."/>
            <person name="Tan C."/>
            <person name="Dehkhoda F."/>
            <person name="Hockings C."/>
            <person name="Calleja D.J."/>
            <person name="Keating N."/>
            <person name="Feltham R."/>
            <person name="Brooks A.J."/>
            <person name="Li S.S."/>
            <person name="Sidhu S.S."/>
            <person name="Babon J.J."/>
            <person name="Kershaw N.J."/>
            <person name="Nicholson S.E."/>
        </authorList>
    </citation>
    <scope>X-RAY CRYSTALLOGRAPHY (3.19 ANGSTROMS) OF 32-198 IN COMPLEX WITH ELOB AND ELOC</scope>
    <scope>FUNCTION</scope>
    <scope>PATHWAY</scope>
    <scope>IDENTIFICATION IN THE ECS(SOCS2) COMPLEX</scope>
    <scope>CHARACTERIZATION OF VARIANT LEU-96</scope>
</reference>
<reference evidence="28 29 30 31 32 33" key="20">
    <citation type="journal article" date="2023" name="Nat. Commun.">
        <title>Structure-based design of a phosphotyrosine-masked covalent ligand targeting the E3 ligase SOCS2.</title>
        <authorList>
            <person name="Ramachandran S."/>
            <person name="Makukhin N."/>
            <person name="Haubrich K."/>
            <person name="Nagala M."/>
            <person name="Forrester B."/>
            <person name="Lynch D.M."/>
            <person name="Casement R."/>
            <person name="Testa A."/>
            <person name="Bruno E."/>
            <person name="Gitto R."/>
            <person name="Ciulli A."/>
        </authorList>
    </citation>
    <scope>X-RAY CRYSTALLOGRAPHY (1.79 ANGSTROMS) OF 32-198 IN COMPLEX WITH ELOB AND ELOC</scope>
    <scope>FUNCTION</scope>
    <scope>ACTIVITY REGULATION</scope>
    <scope>IDENTIFICATION IN THE ECS(SOCS2) COMPLEX</scope>
</reference>
<evidence type="ECO:0000250" key="1">
    <source>
        <dbReference type="UniProtKB" id="O35717"/>
    </source>
</evidence>
<evidence type="ECO:0000255" key="2">
    <source>
        <dbReference type="PROSITE-ProRule" id="PRU00191"/>
    </source>
</evidence>
<evidence type="ECO:0000255" key="3">
    <source>
        <dbReference type="PROSITE-ProRule" id="PRU00194"/>
    </source>
</evidence>
<evidence type="ECO:0000256" key="4">
    <source>
        <dbReference type="SAM" id="MobiDB-lite"/>
    </source>
</evidence>
<evidence type="ECO:0000269" key="5">
    <source>
    </source>
</evidence>
<evidence type="ECO:0000269" key="6">
    <source>
    </source>
</evidence>
<evidence type="ECO:0000269" key="7">
    <source>
    </source>
</evidence>
<evidence type="ECO:0000269" key="8">
    <source>
    </source>
</evidence>
<evidence type="ECO:0000269" key="9">
    <source>
    </source>
</evidence>
<evidence type="ECO:0000269" key="10">
    <source>
    </source>
</evidence>
<evidence type="ECO:0000269" key="11">
    <source>
    </source>
</evidence>
<evidence type="ECO:0000269" key="12">
    <source>
    </source>
</evidence>
<evidence type="ECO:0000269" key="13">
    <source>
    </source>
</evidence>
<evidence type="ECO:0000269" key="14">
    <source>
    </source>
</evidence>
<evidence type="ECO:0000269" key="15">
    <source>
    </source>
</evidence>
<evidence type="ECO:0000269" key="16">
    <source>
    </source>
</evidence>
<evidence type="ECO:0000303" key="17">
    <source>
    </source>
</evidence>
<evidence type="ECO:0000303" key="18">
    <source>
    </source>
</evidence>
<evidence type="ECO:0000303" key="19">
    <source>
    </source>
</evidence>
<evidence type="ECO:0000303" key="20">
    <source>
    </source>
</evidence>
<evidence type="ECO:0000305" key="21"/>
<evidence type="ECO:0000312" key="22">
    <source>
        <dbReference type="HGNC" id="HGNC:19382"/>
    </source>
</evidence>
<evidence type="ECO:0007744" key="23">
    <source>
        <dbReference type="PDB" id="4JGH"/>
    </source>
</evidence>
<evidence type="ECO:0007744" key="24">
    <source>
        <dbReference type="PDB" id="6I4X"/>
    </source>
</evidence>
<evidence type="ECO:0007744" key="25">
    <source>
        <dbReference type="PDB" id="6I5J"/>
    </source>
</evidence>
<evidence type="ECO:0007744" key="26">
    <source>
        <dbReference type="PDB" id="6I5N"/>
    </source>
</evidence>
<evidence type="ECO:0007744" key="27">
    <source>
        <dbReference type="PDB" id="7M6T"/>
    </source>
</evidence>
<evidence type="ECO:0007744" key="28">
    <source>
        <dbReference type="PDB" id="7ZLM"/>
    </source>
</evidence>
<evidence type="ECO:0007744" key="29">
    <source>
        <dbReference type="PDB" id="7ZLN"/>
    </source>
</evidence>
<evidence type="ECO:0007744" key="30">
    <source>
        <dbReference type="PDB" id="7ZLO"/>
    </source>
</evidence>
<evidence type="ECO:0007744" key="31">
    <source>
        <dbReference type="PDB" id="7ZLP"/>
    </source>
</evidence>
<evidence type="ECO:0007744" key="32">
    <source>
        <dbReference type="PDB" id="7ZLR"/>
    </source>
</evidence>
<evidence type="ECO:0007744" key="33">
    <source>
        <dbReference type="PDB" id="7ZLS"/>
    </source>
</evidence>
<evidence type="ECO:0007744" key="34">
    <source>
    </source>
</evidence>
<evidence type="ECO:0007829" key="35">
    <source>
        <dbReference type="PDB" id="6I5J"/>
    </source>
</evidence>
<evidence type="ECO:0007829" key="36">
    <source>
        <dbReference type="PDB" id="7ZLM"/>
    </source>
</evidence>
<evidence type="ECO:0007829" key="37">
    <source>
        <dbReference type="PDB" id="7ZLN"/>
    </source>
</evidence>
<evidence type="ECO:0007829" key="38">
    <source>
        <dbReference type="PDB" id="7ZLO"/>
    </source>
</evidence>
<evidence type="ECO:0007829" key="39">
    <source>
        <dbReference type="PDB" id="7ZLP"/>
    </source>
</evidence>
<dbReference type="EMBL" id="AB004903">
    <property type="protein sequence ID" value="BAA22429.1"/>
    <property type="molecule type" value="mRNA"/>
</dbReference>
<dbReference type="EMBL" id="AB006966">
    <property type="protein sequence ID" value="BAA22536.1"/>
    <property type="molecule type" value="mRNA"/>
</dbReference>
<dbReference type="EMBL" id="AF020590">
    <property type="protein sequence ID" value="AAC98896.1"/>
    <property type="molecule type" value="mRNA"/>
</dbReference>
<dbReference type="EMBL" id="AF037989">
    <property type="protein sequence ID" value="AAC34745.1"/>
    <property type="molecule type" value="mRNA"/>
</dbReference>
<dbReference type="EMBL" id="AK290546">
    <property type="protein sequence ID" value="BAF83235.1"/>
    <property type="molecule type" value="mRNA"/>
</dbReference>
<dbReference type="EMBL" id="AK313165">
    <property type="protein sequence ID" value="BAG35983.1"/>
    <property type="molecule type" value="mRNA"/>
</dbReference>
<dbReference type="EMBL" id="CH471054">
    <property type="protein sequence ID" value="EAW97492.1"/>
    <property type="molecule type" value="Genomic_DNA"/>
</dbReference>
<dbReference type="EMBL" id="BC010399">
    <property type="protein sequence ID" value="AAH10399.1"/>
    <property type="molecule type" value="mRNA"/>
</dbReference>
<dbReference type="EMBL" id="AF132441">
    <property type="protein sequence ID" value="AAD27710.1"/>
    <property type="molecule type" value="Genomic_DNA"/>
</dbReference>
<dbReference type="CCDS" id="CCDS9047.1"/>
<dbReference type="PIR" id="JC5626">
    <property type="entry name" value="JC5626"/>
</dbReference>
<dbReference type="PIR" id="JC5760">
    <property type="entry name" value="JC5760"/>
</dbReference>
<dbReference type="RefSeq" id="NP_001257396.1">
    <property type="nucleotide sequence ID" value="NM_001270467.2"/>
</dbReference>
<dbReference type="RefSeq" id="NP_001257397.1">
    <property type="nucleotide sequence ID" value="NM_001270468.2"/>
</dbReference>
<dbReference type="RefSeq" id="NP_001257398.1">
    <property type="nucleotide sequence ID" value="NM_001270469.2"/>
</dbReference>
<dbReference type="RefSeq" id="NP_001257399.1">
    <property type="nucleotide sequence ID" value="NM_001270470.1"/>
</dbReference>
<dbReference type="RefSeq" id="NP_001257400.1">
    <property type="nucleotide sequence ID" value="NM_001270471.2"/>
</dbReference>
<dbReference type="RefSeq" id="NP_003868.1">
    <property type="nucleotide sequence ID" value="NM_003877.5"/>
</dbReference>
<dbReference type="RefSeq" id="XP_016875645.1">
    <property type="nucleotide sequence ID" value="XM_017020156.1"/>
</dbReference>
<dbReference type="RefSeq" id="XP_047285764.1">
    <property type="nucleotide sequence ID" value="XM_047429808.1"/>
</dbReference>
<dbReference type="PDB" id="2C9W">
    <property type="method" value="X-ray"/>
    <property type="resolution" value="1.90 A"/>
    <property type="chains" value="A=32-198"/>
</dbReference>
<dbReference type="PDB" id="4JGH">
    <property type="method" value="X-ray"/>
    <property type="resolution" value="3.00 A"/>
    <property type="chains" value="A=32-198"/>
</dbReference>
<dbReference type="PDB" id="5BO4">
    <property type="method" value="X-ray"/>
    <property type="resolution" value="2.90 A"/>
    <property type="chains" value="A/D/G/J/M/P=32-198"/>
</dbReference>
<dbReference type="PDB" id="6I4X">
    <property type="method" value="X-ray"/>
    <property type="resolution" value="2.69 A"/>
    <property type="chains" value="A=30-198"/>
</dbReference>
<dbReference type="PDB" id="6I5J">
    <property type="method" value="X-ray"/>
    <property type="resolution" value="2.80 A"/>
    <property type="chains" value="A/D=30-198"/>
</dbReference>
<dbReference type="PDB" id="6I5N">
    <property type="method" value="X-ray"/>
    <property type="resolution" value="1.98 A"/>
    <property type="chains" value="A/D=30-198"/>
</dbReference>
<dbReference type="PDB" id="7M6T">
    <property type="method" value="X-ray"/>
    <property type="resolution" value="3.19 A"/>
    <property type="chains" value="A=32-198"/>
</dbReference>
<dbReference type="PDB" id="7ZLM">
    <property type="method" value="X-ray"/>
    <property type="resolution" value="1.79 A"/>
    <property type="chains" value="A/D/G/J=32-198"/>
</dbReference>
<dbReference type="PDB" id="7ZLN">
    <property type="method" value="X-ray"/>
    <property type="resolution" value="2.60 A"/>
    <property type="chains" value="A=32-198"/>
</dbReference>
<dbReference type="PDB" id="7ZLO">
    <property type="method" value="X-ray"/>
    <property type="resolution" value="2.22 A"/>
    <property type="chains" value="A=32-198"/>
</dbReference>
<dbReference type="PDB" id="7ZLP">
    <property type="method" value="X-ray"/>
    <property type="resolution" value="1.94 A"/>
    <property type="chains" value="A=32-198"/>
</dbReference>
<dbReference type="PDB" id="7ZLR">
    <property type="method" value="X-ray"/>
    <property type="resolution" value="2.01 A"/>
    <property type="chains" value="A=32-198"/>
</dbReference>
<dbReference type="PDB" id="7ZLS">
    <property type="method" value="X-ray"/>
    <property type="resolution" value="1.92 A"/>
    <property type="chains" value="A/D/G/J=32-198"/>
</dbReference>
<dbReference type="PDBsum" id="2C9W"/>
<dbReference type="PDBsum" id="4JGH"/>
<dbReference type="PDBsum" id="5BO4"/>
<dbReference type="PDBsum" id="6I4X"/>
<dbReference type="PDBsum" id="6I5J"/>
<dbReference type="PDBsum" id="6I5N"/>
<dbReference type="PDBsum" id="7M6T"/>
<dbReference type="PDBsum" id="7ZLM"/>
<dbReference type="PDBsum" id="7ZLN"/>
<dbReference type="PDBsum" id="7ZLO"/>
<dbReference type="PDBsum" id="7ZLP"/>
<dbReference type="PDBsum" id="7ZLR"/>
<dbReference type="PDBsum" id="7ZLS"/>
<dbReference type="SMR" id="O14508"/>
<dbReference type="BioGRID" id="114362">
    <property type="interactions" value="97"/>
</dbReference>
<dbReference type="CORUM" id="O14508"/>
<dbReference type="DIP" id="DIP-29569N"/>
<dbReference type="FunCoup" id="O14508">
    <property type="interactions" value="908"/>
</dbReference>
<dbReference type="IntAct" id="O14508">
    <property type="interactions" value="17"/>
</dbReference>
<dbReference type="MINT" id="O14508"/>
<dbReference type="STRING" id="9606.ENSP00000481249"/>
<dbReference type="iPTMnet" id="O14508"/>
<dbReference type="PhosphoSitePlus" id="O14508"/>
<dbReference type="BioMuta" id="SOCS2"/>
<dbReference type="jPOST" id="O14508"/>
<dbReference type="MassIVE" id="O14508"/>
<dbReference type="PaxDb" id="9606-ENSP00000481249"/>
<dbReference type="PeptideAtlas" id="O14508"/>
<dbReference type="ProteomicsDB" id="48046"/>
<dbReference type="Pumba" id="O14508"/>
<dbReference type="Antibodypedia" id="4158">
    <property type="antibodies" value="293 antibodies from 38 providers"/>
</dbReference>
<dbReference type="DNASU" id="8835"/>
<dbReference type="Ensembl" id="ENST00000340600.6">
    <property type="protein sequence ID" value="ENSP00000339428.2"/>
    <property type="gene ID" value="ENSG00000120833.14"/>
</dbReference>
<dbReference type="Ensembl" id="ENST00000536696.6">
    <property type="protein sequence ID" value="ENSP00000442898.2"/>
    <property type="gene ID" value="ENSG00000120833.14"/>
</dbReference>
<dbReference type="Ensembl" id="ENST00000549122.5">
    <property type="protein sequence ID" value="ENSP00000447161.1"/>
    <property type="gene ID" value="ENSG00000120833.14"/>
</dbReference>
<dbReference type="Ensembl" id="ENST00000549206.5">
    <property type="protein sequence ID" value="ENSP00000448815.1"/>
    <property type="gene ID" value="ENSG00000120833.14"/>
</dbReference>
<dbReference type="Ensembl" id="ENST00000551556.2">
    <property type="protein sequence ID" value="ENSP00000449227.1"/>
    <property type="gene ID" value="ENSG00000120833.14"/>
</dbReference>
<dbReference type="Ensembl" id="ENST00000622746.4">
    <property type="protein sequence ID" value="ENSP00000481249.1"/>
    <property type="gene ID" value="ENSG00000120833.14"/>
</dbReference>
<dbReference type="GeneID" id="8835"/>
<dbReference type="KEGG" id="hsa:8835"/>
<dbReference type="MANE-Select" id="ENST00000551556.2">
    <property type="protein sequence ID" value="ENSP00000449227.1"/>
    <property type="RefSeq nucleotide sequence ID" value="NM_001270471.2"/>
    <property type="RefSeq protein sequence ID" value="NP_001257400.1"/>
</dbReference>
<dbReference type="UCSC" id="uc001tcw.3">
    <property type="organism name" value="human"/>
</dbReference>
<dbReference type="AGR" id="HGNC:19382"/>
<dbReference type="CTD" id="8835"/>
<dbReference type="DisGeNET" id="8835"/>
<dbReference type="GeneCards" id="SOCS2"/>
<dbReference type="HGNC" id="HGNC:19382">
    <property type="gene designation" value="SOCS2"/>
</dbReference>
<dbReference type="HPA" id="ENSG00000120833">
    <property type="expression patterns" value="Low tissue specificity"/>
</dbReference>
<dbReference type="MalaCards" id="SOCS2"/>
<dbReference type="MIM" id="605117">
    <property type="type" value="gene"/>
</dbReference>
<dbReference type="neXtProt" id="NX_O14508"/>
<dbReference type="OpenTargets" id="ENSG00000120833"/>
<dbReference type="PharmGKB" id="PA128394542"/>
<dbReference type="VEuPathDB" id="HostDB:ENSG00000120833"/>
<dbReference type="eggNOG" id="KOG4566">
    <property type="taxonomic scope" value="Eukaryota"/>
</dbReference>
<dbReference type="GeneTree" id="ENSGT00940000157983"/>
<dbReference type="InParanoid" id="O14508"/>
<dbReference type="OMA" id="LRKTGWY"/>
<dbReference type="OrthoDB" id="10063348at2759"/>
<dbReference type="PAN-GO" id="O14508">
    <property type="GO annotations" value="3 GO annotations based on evolutionary models"/>
</dbReference>
<dbReference type="PhylomeDB" id="O14508"/>
<dbReference type="TreeFam" id="TF321368"/>
<dbReference type="PathwayCommons" id="O14508"/>
<dbReference type="Reactome" id="R-HSA-1266695">
    <property type="pathway name" value="Interleukin-7 signaling"/>
</dbReference>
<dbReference type="Reactome" id="R-HSA-8951664">
    <property type="pathway name" value="Neddylation"/>
</dbReference>
<dbReference type="Reactome" id="R-HSA-9706369">
    <property type="pathway name" value="Negative regulation of FLT3"/>
</dbReference>
<dbReference type="Reactome" id="R-HSA-982772">
    <property type="pathway name" value="Growth hormone receptor signaling"/>
</dbReference>
<dbReference type="SignaLink" id="O14508"/>
<dbReference type="SIGNOR" id="O14508"/>
<dbReference type="UniPathway" id="UPA00143"/>
<dbReference type="BioGRID-ORCS" id="8835">
    <property type="hits" value="20 hits in 1200 CRISPR screens"/>
</dbReference>
<dbReference type="ChiTaRS" id="SOCS2">
    <property type="organism name" value="human"/>
</dbReference>
<dbReference type="EvolutionaryTrace" id="O14508"/>
<dbReference type="GeneWiki" id="SOCS2"/>
<dbReference type="GenomeRNAi" id="8835"/>
<dbReference type="Pharos" id="O14508">
    <property type="development level" value="Tbio"/>
</dbReference>
<dbReference type="PRO" id="PR:O14508"/>
<dbReference type="Proteomes" id="UP000005640">
    <property type="component" value="Chromosome 12"/>
</dbReference>
<dbReference type="RNAct" id="O14508">
    <property type="molecule type" value="protein"/>
</dbReference>
<dbReference type="Bgee" id="ENSG00000120833">
    <property type="expression patterns" value="Expressed in secondary oocyte and 185 other cell types or tissues"/>
</dbReference>
<dbReference type="ExpressionAtlas" id="O14508">
    <property type="expression patterns" value="baseline and differential"/>
</dbReference>
<dbReference type="GO" id="GO:0031466">
    <property type="term" value="C:Cul5-RING ubiquitin ligase complex"/>
    <property type="evidence" value="ECO:0000314"/>
    <property type="project" value="UniProtKB"/>
</dbReference>
<dbReference type="GO" id="GO:0005737">
    <property type="term" value="C:cytoplasm"/>
    <property type="evidence" value="ECO:0000314"/>
    <property type="project" value="UniProt"/>
</dbReference>
<dbReference type="GO" id="GO:0005829">
    <property type="term" value="C:cytosol"/>
    <property type="evidence" value="ECO:0000304"/>
    <property type="project" value="Reactome"/>
</dbReference>
<dbReference type="GO" id="GO:0005126">
    <property type="term" value="F:cytokine receptor binding"/>
    <property type="evidence" value="ECO:0000318"/>
    <property type="project" value="GO_Central"/>
</dbReference>
<dbReference type="GO" id="GO:0005131">
    <property type="term" value="F:growth hormone receptor binding"/>
    <property type="evidence" value="ECO:0000303"/>
    <property type="project" value="UniProtKB"/>
</dbReference>
<dbReference type="GO" id="GO:0005159">
    <property type="term" value="F:insulin-like growth factor receptor binding"/>
    <property type="evidence" value="ECO:0000353"/>
    <property type="project" value="UniProtKB"/>
</dbReference>
<dbReference type="GO" id="GO:0008269">
    <property type="term" value="F:JAK pathway signal transduction adaptor activity"/>
    <property type="evidence" value="ECO:0000304"/>
    <property type="project" value="ProtInc"/>
</dbReference>
<dbReference type="GO" id="GO:0140031">
    <property type="term" value="F:phosphorylation-dependent protein binding"/>
    <property type="evidence" value="ECO:0000314"/>
    <property type="project" value="UniProtKB"/>
</dbReference>
<dbReference type="GO" id="GO:1990756">
    <property type="term" value="F:ubiquitin-like ligase-substrate adaptor activity"/>
    <property type="evidence" value="ECO:0000314"/>
    <property type="project" value="UniProtKB"/>
</dbReference>
<dbReference type="GO" id="GO:0007259">
    <property type="term" value="P:cell surface receptor signaling pathway via JAK-STAT"/>
    <property type="evidence" value="ECO:0000304"/>
    <property type="project" value="ProtInc"/>
</dbReference>
<dbReference type="GO" id="GO:0032870">
    <property type="term" value="P:cellular response to hormone stimulus"/>
    <property type="evidence" value="ECO:0000314"/>
    <property type="project" value="BHF-UCL"/>
</dbReference>
<dbReference type="GO" id="GO:0019221">
    <property type="term" value="P:cytokine-mediated signaling pathway"/>
    <property type="evidence" value="ECO:0000318"/>
    <property type="project" value="GO_Central"/>
</dbReference>
<dbReference type="GO" id="GO:0060396">
    <property type="term" value="P:growth hormone receptor signaling pathway"/>
    <property type="evidence" value="ECO:0000314"/>
    <property type="project" value="BHF-UCL"/>
</dbReference>
<dbReference type="GO" id="GO:0035556">
    <property type="term" value="P:intracellular signal transduction"/>
    <property type="evidence" value="ECO:0007669"/>
    <property type="project" value="Ensembl"/>
</dbReference>
<dbReference type="GO" id="GO:0007595">
    <property type="term" value="P:lactation"/>
    <property type="evidence" value="ECO:0007669"/>
    <property type="project" value="Ensembl"/>
</dbReference>
<dbReference type="GO" id="GO:0060749">
    <property type="term" value="P:mammary gland alveolus development"/>
    <property type="evidence" value="ECO:0007669"/>
    <property type="project" value="Ensembl"/>
</dbReference>
<dbReference type="GO" id="GO:0043066">
    <property type="term" value="P:negative regulation of apoptotic process"/>
    <property type="evidence" value="ECO:0000304"/>
    <property type="project" value="ProtInc"/>
</dbReference>
<dbReference type="GO" id="GO:0060400">
    <property type="term" value="P:negative regulation of growth hormone receptor signaling pathway"/>
    <property type="evidence" value="ECO:0000314"/>
    <property type="project" value="UniProtKB"/>
</dbReference>
<dbReference type="GO" id="GO:0040015">
    <property type="term" value="P:negative regulation of multicellular organism growth"/>
    <property type="evidence" value="ECO:0007669"/>
    <property type="project" value="Ensembl"/>
</dbReference>
<dbReference type="GO" id="GO:0046426">
    <property type="term" value="P:negative regulation of receptor signaling pathway via JAK-STAT"/>
    <property type="evidence" value="ECO:0000318"/>
    <property type="project" value="GO_Central"/>
</dbReference>
<dbReference type="GO" id="GO:0009968">
    <property type="term" value="P:negative regulation of signal transduction"/>
    <property type="evidence" value="ECO:0000314"/>
    <property type="project" value="UniProtKB"/>
</dbReference>
<dbReference type="GO" id="GO:0045666">
    <property type="term" value="P:positive regulation of neuron differentiation"/>
    <property type="evidence" value="ECO:0007669"/>
    <property type="project" value="Ensembl"/>
</dbReference>
<dbReference type="GO" id="GO:0043161">
    <property type="term" value="P:proteasome-mediated ubiquitin-dependent protein catabolic process"/>
    <property type="evidence" value="ECO:0000314"/>
    <property type="project" value="UniProtKB"/>
</dbReference>
<dbReference type="GO" id="GO:0016567">
    <property type="term" value="P:protein ubiquitination"/>
    <property type="evidence" value="ECO:0007669"/>
    <property type="project" value="UniProtKB-UniPathway"/>
</dbReference>
<dbReference type="GO" id="GO:0001558">
    <property type="term" value="P:regulation of cell growth"/>
    <property type="evidence" value="ECO:0000303"/>
    <property type="project" value="UniProtKB"/>
</dbReference>
<dbReference type="GO" id="GO:0009966">
    <property type="term" value="P:regulation of signal transduction"/>
    <property type="evidence" value="ECO:0000303"/>
    <property type="project" value="UniProtKB"/>
</dbReference>
<dbReference type="GO" id="GO:0032355">
    <property type="term" value="P:response to estradiol"/>
    <property type="evidence" value="ECO:0000314"/>
    <property type="project" value="BHF-UCL"/>
</dbReference>
<dbReference type="CDD" id="cd10383">
    <property type="entry name" value="SH2_SOCS2"/>
    <property type="match status" value="1"/>
</dbReference>
<dbReference type="CDD" id="cd03736">
    <property type="entry name" value="SOCS_SOCS2"/>
    <property type="match status" value="1"/>
</dbReference>
<dbReference type="FunFam" id="1.10.750.20:FF:000002">
    <property type="entry name" value="Suppressor of cytokine signaling 2"/>
    <property type="match status" value="1"/>
</dbReference>
<dbReference type="FunFam" id="3.30.505.10:FF:000049">
    <property type="entry name" value="Suppressor of cytokine signaling 2"/>
    <property type="match status" value="1"/>
</dbReference>
<dbReference type="Gene3D" id="3.30.505.10">
    <property type="entry name" value="SH2 domain"/>
    <property type="match status" value="1"/>
</dbReference>
<dbReference type="Gene3D" id="1.10.750.20">
    <property type="entry name" value="SOCS box"/>
    <property type="match status" value="1"/>
</dbReference>
<dbReference type="IDEAL" id="IID00523"/>
<dbReference type="InterPro" id="IPR000980">
    <property type="entry name" value="SH2"/>
</dbReference>
<dbReference type="InterPro" id="IPR036860">
    <property type="entry name" value="SH2_dom_sf"/>
</dbReference>
<dbReference type="InterPro" id="IPR035862">
    <property type="entry name" value="SOCS2_SH2"/>
</dbReference>
<dbReference type="InterPro" id="IPR028410">
    <property type="entry name" value="SOCS2_SOCS_box"/>
</dbReference>
<dbReference type="InterPro" id="IPR001496">
    <property type="entry name" value="SOCS_box"/>
</dbReference>
<dbReference type="InterPro" id="IPR036036">
    <property type="entry name" value="SOCS_box-like_dom_sf"/>
</dbReference>
<dbReference type="PANTHER" id="PTHR10155">
    <property type="entry name" value="PHOSPHATIDYLINOSITOL 3-KINASE REGULATORY SUBUNIT"/>
    <property type="match status" value="1"/>
</dbReference>
<dbReference type="PANTHER" id="PTHR10155:SF7">
    <property type="entry name" value="SUPPRESSOR OF CYTOKINE SIGNALING 2"/>
    <property type="match status" value="1"/>
</dbReference>
<dbReference type="Pfam" id="PF00017">
    <property type="entry name" value="SH2"/>
    <property type="match status" value="1"/>
</dbReference>
<dbReference type="Pfam" id="PF07525">
    <property type="entry name" value="SOCS_box"/>
    <property type="match status" value="1"/>
</dbReference>
<dbReference type="PRINTS" id="PR00401">
    <property type="entry name" value="SH2DOMAIN"/>
</dbReference>
<dbReference type="SMART" id="SM00252">
    <property type="entry name" value="SH2"/>
    <property type="match status" value="1"/>
</dbReference>
<dbReference type="SMART" id="SM00253">
    <property type="entry name" value="SOCS"/>
    <property type="match status" value="1"/>
</dbReference>
<dbReference type="SMART" id="SM00969">
    <property type="entry name" value="SOCS_box"/>
    <property type="match status" value="1"/>
</dbReference>
<dbReference type="SUPFAM" id="SSF55550">
    <property type="entry name" value="SH2 domain"/>
    <property type="match status" value="1"/>
</dbReference>
<dbReference type="SUPFAM" id="SSF158235">
    <property type="entry name" value="SOCS box-like"/>
    <property type="match status" value="1"/>
</dbReference>
<dbReference type="PROSITE" id="PS50001">
    <property type="entry name" value="SH2"/>
    <property type="match status" value="1"/>
</dbReference>
<dbReference type="PROSITE" id="PS50225">
    <property type="entry name" value="SOCS"/>
    <property type="match status" value="1"/>
</dbReference>
<keyword id="KW-0002">3D-structure</keyword>
<keyword id="KW-0963">Cytoplasm</keyword>
<keyword id="KW-0341">Growth regulation</keyword>
<keyword id="KW-1017">Isopeptide bond</keyword>
<keyword id="KW-0597">Phosphoprotein</keyword>
<keyword id="KW-1267">Proteomics identification</keyword>
<keyword id="KW-1185">Reference proteome</keyword>
<keyword id="KW-0727">SH2 domain</keyword>
<keyword id="KW-0734">Signal transduction inhibitor</keyword>
<keyword id="KW-0832">Ubl conjugation</keyword>
<keyword id="KW-0833">Ubl conjugation pathway</keyword>
<sequence>MTLRCLEPSGNGGEGTRSQWGTAGSAEEPSPQAARLAKALRELGQTGWYWGSMTVNEAKEKLKEAPEGTFLIRDSSHSDYLLTISVKTSAGPTNLRIEYQDGKFRLDSIICVKSKLKQFDSVVHLIDYYVQMCKDKRTGPEAPRNGTVHLYLTKPLYTSAPSLQHLCRLTINKCTGAIWGLPLPTRLKDYLEEYKFQV</sequence>